<name>CHEB2_BURP1</name>
<sequence length="342" mass="36134">MNIGIVNDLPLAVEALRRTIALRPEHRVLWVATDGAQALDFCVAQPPDLVLMDLVMPRIDGVSATRSIMERSPCAILIVTANVGANASYVYEAMGAGALDAVDTPTLEQGGSADPSQPLLAKIDQIGRLLATRMPLAAPAAAAPAPQGALPPLVAIGASAGGPTALTALLRRLPDDFPAALVIVQHVDQAFAIGMAQWLDGYSPLPVRIARQGSVPQAGEVLLAATNDHLHLTSRGVLAYTRRPEETPYRPSVDVFFHSVVDHWKGEAIGVLLTGMGRDGALGLKAMRTKGHYTIAQDEATSAVYGMPKAAAAIGAASAVLPLERIADQLISLVQRNRQRWR</sequence>
<organism>
    <name type="scientific">Burkholderia pseudomallei (strain 1710b)</name>
    <dbReference type="NCBI Taxonomy" id="320372"/>
    <lineage>
        <taxon>Bacteria</taxon>
        <taxon>Pseudomonadati</taxon>
        <taxon>Pseudomonadota</taxon>
        <taxon>Betaproteobacteria</taxon>
        <taxon>Burkholderiales</taxon>
        <taxon>Burkholderiaceae</taxon>
        <taxon>Burkholderia</taxon>
        <taxon>pseudomallei group</taxon>
    </lineage>
</organism>
<protein>
    <recommendedName>
        <fullName evidence="1">Protein-glutamate methylesterase/protein-glutamine glutaminase 2</fullName>
        <ecNumber evidence="1">3.1.1.61</ecNumber>
        <ecNumber evidence="1">3.5.1.44</ecNumber>
    </recommendedName>
</protein>
<feature type="chain" id="PRO_0000225448" description="Protein-glutamate methylesterase/protein-glutamine glutaminase 2">
    <location>
        <begin position="1"/>
        <end position="342"/>
    </location>
</feature>
<feature type="domain" description="Response regulatory" evidence="1">
    <location>
        <begin position="2"/>
        <end position="119"/>
    </location>
</feature>
<feature type="domain" description="CheB-type methylesterase" evidence="1">
    <location>
        <begin position="144"/>
        <end position="337"/>
    </location>
</feature>
<feature type="active site" evidence="1">
    <location>
        <position position="159"/>
    </location>
</feature>
<feature type="active site" evidence="1">
    <location>
        <position position="186"/>
    </location>
</feature>
<feature type="active site" evidence="1">
    <location>
        <position position="279"/>
    </location>
</feature>
<feature type="modified residue" description="4-aspartylphosphate" evidence="1">
    <location>
        <position position="53"/>
    </location>
</feature>
<comment type="function">
    <text evidence="1">Involved in chemotaxis. Part of a chemotaxis signal transduction system that modulates chemotaxis in response to various stimuli. Catalyzes the demethylation of specific methylglutamate residues introduced into the chemoreceptors (methyl-accepting chemotaxis proteins or MCP) by CheR. Also mediates the irreversible deamidation of specific glutamine residues to glutamic acid.</text>
</comment>
<comment type="catalytic activity">
    <reaction evidence="1">
        <text>[protein]-L-glutamate 5-O-methyl ester + H2O = L-glutamyl-[protein] + methanol + H(+)</text>
        <dbReference type="Rhea" id="RHEA:23236"/>
        <dbReference type="Rhea" id="RHEA-COMP:10208"/>
        <dbReference type="Rhea" id="RHEA-COMP:10311"/>
        <dbReference type="ChEBI" id="CHEBI:15377"/>
        <dbReference type="ChEBI" id="CHEBI:15378"/>
        <dbReference type="ChEBI" id="CHEBI:17790"/>
        <dbReference type="ChEBI" id="CHEBI:29973"/>
        <dbReference type="ChEBI" id="CHEBI:82795"/>
        <dbReference type="EC" id="3.1.1.61"/>
    </reaction>
</comment>
<comment type="catalytic activity">
    <reaction evidence="1">
        <text>L-glutaminyl-[protein] + H2O = L-glutamyl-[protein] + NH4(+)</text>
        <dbReference type="Rhea" id="RHEA:16441"/>
        <dbReference type="Rhea" id="RHEA-COMP:10207"/>
        <dbReference type="Rhea" id="RHEA-COMP:10208"/>
        <dbReference type="ChEBI" id="CHEBI:15377"/>
        <dbReference type="ChEBI" id="CHEBI:28938"/>
        <dbReference type="ChEBI" id="CHEBI:29973"/>
        <dbReference type="ChEBI" id="CHEBI:30011"/>
        <dbReference type="EC" id="3.5.1.44"/>
    </reaction>
</comment>
<comment type="subcellular location">
    <subcellularLocation>
        <location evidence="1">Cytoplasm</location>
    </subcellularLocation>
</comment>
<comment type="domain">
    <text evidence="1">Contains a C-terminal catalytic domain, and an N-terminal region which modulates catalytic activity.</text>
</comment>
<comment type="PTM">
    <text evidence="1">Phosphorylated by CheA. Phosphorylation of the N-terminal regulatory domain activates the methylesterase activity.</text>
</comment>
<comment type="similarity">
    <text evidence="1">Belongs to the CheB family.</text>
</comment>
<accession>Q3JJY2</accession>
<gene>
    <name evidence="1" type="primary">cheB2</name>
    <name type="ordered locus">BURPS1710b_A0963</name>
</gene>
<reference key="1">
    <citation type="journal article" date="2010" name="Genome Biol. Evol.">
        <title>Continuing evolution of Burkholderia mallei through genome reduction and large-scale rearrangements.</title>
        <authorList>
            <person name="Losada L."/>
            <person name="Ronning C.M."/>
            <person name="DeShazer D."/>
            <person name="Woods D."/>
            <person name="Fedorova N."/>
            <person name="Kim H.S."/>
            <person name="Shabalina S.A."/>
            <person name="Pearson T.R."/>
            <person name="Brinkac L."/>
            <person name="Tan P."/>
            <person name="Nandi T."/>
            <person name="Crabtree J."/>
            <person name="Badger J."/>
            <person name="Beckstrom-Sternberg S."/>
            <person name="Saqib M."/>
            <person name="Schutzer S.E."/>
            <person name="Keim P."/>
            <person name="Nierman W.C."/>
        </authorList>
    </citation>
    <scope>NUCLEOTIDE SEQUENCE [LARGE SCALE GENOMIC DNA]</scope>
    <source>
        <strain>1710b</strain>
    </source>
</reference>
<evidence type="ECO:0000255" key="1">
    <source>
        <dbReference type="HAMAP-Rule" id="MF_00099"/>
    </source>
</evidence>
<keyword id="KW-0145">Chemotaxis</keyword>
<keyword id="KW-0963">Cytoplasm</keyword>
<keyword id="KW-0378">Hydrolase</keyword>
<keyword id="KW-0597">Phosphoprotein</keyword>
<dbReference type="EC" id="3.1.1.61" evidence="1"/>
<dbReference type="EC" id="3.5.1.44" evidence="1"/>
<dbReference type="EMBL" id="CP000125">
    <property type="protein sequence ID" value="ABA51495.1"/>
    <property type="molecule type" value="Genomic_DNA"/>
</dbReference>
<dbReference type="RefSeq" id="WP_004190908.1">
    <property type="nucleotide sequence ID" value="NC_007435.1"/>
</dbReference>
<dbReference type="SMR" id="Q3JJY2"/>
<dbReference type="EnsemblBacteria" id="ABA51495">
    <property type="protein sequence ID" value="ABA51495"/>
    <property type="gene ID" value="BURPS1710b_A0963"/>
</dbReference>
<dbReference type="KEGG" id="bpm:BURPS1710b_A0963"/>
<dbReference type="HOGENOM" id="CLU_000445_51_0_4"/>
<dbReference type="Proteomes" id="UP000002700">
    <property type="component" value="Chromosome II"/>
</dbReference>
<dbReference type="GO" id="GO:0005737">
    <property type="term" value="C:cytoplasm"/>
    <property type="evidence" value="ECO:0007669"/>
    <property type="project" value="UniProtKB-SubCell"/>
</dbReference>
<dbReference type="GO" id="GO:0000156">
    <property type="term" value="F:phosphorelay response regulator activity"/>
    <property type="evidence" value="ECO:0007669"/>
    <property type="project" value="InterPro"/>
</dbReference>
<dbReference type="GO" id="GO:0008984">
    <property type="term" value="F:protein-glutamate methylesterase activity"/>
    <property type="evidence" value="ECO:0007669"/>
    <property type="project" value="UniProtKB-UniRule"/>
</dbReference>
<dbReference type="GO" id="GO:0050568">
    <property type="term" value="F:protein-glutamine glutaminase activity"/>
    <property type="evidence" value="ECO:0007669"/>
    <property type="project" value="UniProtKB-UniRule"/>
</dbReference>
<dbReference type="GO" id="GO:0006935">
    <property type="term" value="P:chemotaxis"/>
    <property type="evidence" value="ECO:0007669"/>
    <property type="project" value="UniProtKB-UniRule"/>
</dbReference>
<dbReference type="CDD" id="cd16432">
    <property type="entry name" value="CheB_Rec"/>
    <property type="match status" value="1"/>
</dbReference>
<dbReference type="CDD" id="cd17541">
    <property type="entry name" value="REC_CheB-like"/>
    <property type="match status" value="1"/>
</dbReference>
<dbReference type="Gene3D" id="3.40.50.2300">
    <property type="match status" value="1"/>
</dbReference>
<dbReference type="Gene3D" id="3.40.50.180">
    <property type="entry name" value="Methylesterase CheB, C-terminal domain"/>
    <property type="match status" value="1"/>
</dbReference>
<dbReference type="HAMAP" id="MF_00099">
    <property type="entry name" value="CheB_chemtxs"/>
    <property type="match status" value="1"/>
</dbReference>
<dbReference type="InterPro" id="IPR008248">
    <property type="entry name" value="CheB-like"/>
</dbReference>
<dbReference type="InterPro" id="IPR035909">
    <property type="entry name" value="CheB_C"/>
</dbReference>
<dbReference type="InterPro" id="IPR011006">
    <property type="entry name" value="CheY-like_superfamily"/>
</dbReference>
<dbReference type="InterPro" id="IPR000673">
    <property type="entry name" value="Sig_transdc_resp-reg_Me-estase"/>
</dbReference>
<dbReference type="InterPro" id="IPR001789">
    <property type="entry name" value="Sig_transdc_resp-reg_receiver"/>
</dbReference>
<dbReference type="NCBIfam" id="NF009206">
    <property type="entry name" value="PRK12555.1"/>
    <property type="match status" value="1"/>
</dbReference>
<dbReference type="PANTHER" id="PTHR42872">
    <property type="entry name" value="PROTEIN-GLUTAMATE METHYLESTERASE/PROTEIN-GLUTAMINE GLUTAMINASE"/>
    <property type="match status" value="1"/>
</dbReference>
<dbReference type="PANTHER" id="PTHR42872:SF6">
    <property type="entry name" value="PROTEIN-GLUTAMATE METHYLESTERASE_PROTEIN-GLUTAMINE GLUTAMINASE"/>
    <property type="match status" value="1"/>
</dbReference>
<dbReference type="Pfam" id="PF01339">
    <property type="entry name" value="CheB_methylest"/>
    <property type="match status" value="1"/>
</dbReference>
<dbReference type="Pfam" id="PF00072">
    <property type="entry name" value="Response_reg"/>
    <property type="match status" value="1"/>
</dbReference>
<dbReference type="PIRSF" id="PIRSF000876">
    <property type="entry name" value="RR_chemtxs_CheB"/>
    <property type="match status" value="1"/>
</dbReference>
<dbReference type="SMART" id="SM00448">
    <property type="entry name" value="REC"/>
    <property type="match status" value="1"/>
</dbReference>
<dbReference type="SUPFAM" id="SSF52172">
    <property type="entry name" value="CheY-like"/>
    <property type="match status" value="1"/>
</dbReference>
<dbReference type="SUPFAM" id="SSF52738">
    <property type="entry name" value="Methylesterase CheB, C-terminal domain"/>
    <property type="match status" value="1"/>
</dbReference>
<dbReference type="PROSITE" id="PS50122">
    <property type="entry name" value="CHEB"/>
    <property type="match status" value="1"/>
</dbReference>
<dbReference type="PROSITE" id="PS50110">
    <property type="entry name" value="RESPONSE_REGULATORY"/>
    <property type="match status" value="1"/>
</dbReference>
<proteinExistence type="inferred from homology"/>